<evidence type="ECO:0000255" key="1"/>
<evidence type="ECO:0000255" key="2">
    <source>
        <dbReference type="PROSITE-ProRule" id="PRU00448"/>
    </source>
</evidence>
<evidence type="ECO:0000255" key="3">
    <source>
        <dbReference type="PROSITE-ProRule" id="PRU00757"/>
    </source>
</evidence>
<evidence type="ECO:0000269" key="4">
    <source>
    </source>
</evidence>
<evidence type="ECO:0000269" key="5">
    <source>
    </source>
</evidence>
<evidence type="ECO:0000269" key="6">
    <source>
    </source>
</evidence>
<evidence type="ECO:0000305" key="7"/>
<evidence type="ECO:0000305" key="8">
    <source>
    </source>
</evidence>
<protein>
    <recommendedName>
        <fullName>Mitochondrial Rho GTPase 1</fullName>
        <ecNumber>3.6.5.-</ecNumber>
    </recommendedName>
    <alternativeName>
        <fullName>GTPase EF-hand protein of mitochondria 1</fullName>
    </alternativeName>
</protein>
<reference key="1">
    <citation type="journal article" date="1995" name="Proc. Natl. Acad. Sci. U.S.A.">
        <title>The nucleotide sequence of chromosome I from Saccharomyces cerevisiae.</title>
        <authorList>
            <person name="Bussey H."/>
            <person name="Kaback D.B."/>
            <person name="Zhong W.-W."/>
            <person name="Vo D.H."/>
            <person name="Clark M.W."/>
            <person name="Fortin N."/>
            <person name="Hall J."/>
            <person name="Ouellette B.F.F."/>
            <person name="Keng T."/>
            <person name="Barton A.B."/>
            <person name="Su Y."/>
            <person name="Davies C.J."/>
            <person name="Storms R.K."/>
        </authorList>
    </citation>
    <scope>NUCLEOTIDE SEQUENCE [LARGE SCALE GENOMIC DNA]</scope>
    <source>
        <strain>ATCC 204508 / S288c</strain>
    </source>
</reference>
<reference key="2">
    <citation type="journal article" date="2014" name="G3 (Bethesda)">
        <title>The reference genome sequence of Saccharomyces cerevisiae: Then and now.</title>
        <authorList>
            <person name="Engel S.R."/>
            <person name="Dietrich F.S."/>
            <person name="Fisk D.G."/>
            <person name="Binkley G."/>
            <person name="Balakrishnan R."/>
            <person name="Costanzo M.C."/>
            <person name="Dwight S.S."/>
            <person name="Hitz B.C."/>
            <person name="Karra K."/>
            <person name="Nash R.S."/>
            <person name="Weng S."/>
            <person name="Wong E.D."/>
            <person name="Lloyd P."/>
            <person name="Skrzypek M.S."/>
            <person name="Miyasato S.R."/>
            <person name="Simison M."/>
            <person name="Cherry J.M."/>
        </authorList>
    </citation>
    <scope>GENOME REANNOTATION</scope>
    <source>
        <strain>ATCC 204508 / S288c</strain>
    </source>
</reference>
<reference key="3">
    <citation type="journal article" date="2006" name="J. Proteome Res.">
        <title>Toward the complete yeast mitochondrial proteome: multidimensional separation techniques for mitochondrial proteomics.</title>
        <authorList>
            <person name="Reinders J."/>
            <person name="Zahedi R.P."/>
            <person name="Pfanner N."/>
            <person name="Meisinger C."/>
            <person name="Sickmann A."/>
        </authorList>
    </citation>
    <scope>SUBCELLULAR LOCATION [LARGE SCALE ANALYSIS]</scope>
    <scope>IDENTIFICATION BY MASS SPECTROMETRY</scope>
</reference>
<reference key="4">
    <citation type="journal article" date="2006" name="Mol. Biol. Cell">
        <title>Proteomic analysis of the yeast mitochondrial outer membrane reveals accumulation of a subclass of preproteins.</title>
        <authorList>
            <person name="Zahedi R.P."/>
            <person name="Sickmann A."/>
            <person name="Boehm A.M."/>
            <person name="Winkler C."/>
            <person name="Zufall N."/>
            <person name="Schoenfisch B."/>
            <person name="Guiard B."/>
            <person name="Pfanner N."/>
            <person name="Meisinger C."/>
        </authorList>
    </citation>
    <scope>SUBCELLULAR LOCATION</scope>
    <scope>IDENTIFICATION BY MASS SPECTROMETRY</scope>
</reference>
<reference key="5">
    <citation type="journal article" date="1999" name="Yeast">
        <title>The open reading frame YAL048c affects the secretion of proteinase A in S. cerevisiae.</title>
        <authorList>
            <person name="Wolff A.M."/>
            <person name="Petersen J.G."/>
            <person name="Nilsson-Tillgren T."/>
            <person name="Din N."/>
        </authorList>
    </citation>
    <scope>PRELIMINARY FUNCTION</scope>
</reference>
<reference key="6">
    <citation type="journal article" date="2004" name="J. Cell Biol.">
        <title>Yeast Miro GTPase, Gem1p, regulates mitochondrial morphology via a novel pathway.</title>
        <authorList>
            <person name="Frederick R.L."/>
            <person name="McCaffery J.M."/>
            <person name="Cunningham K.W."/>
            <person name="Okamoto K."/>
            <person name="Shaw J.M."/>
        </authorList>
    </citation>
    <scope>FUNCTION</scope>
    <scope>SUBCELLULAR LOCATION</scope>
    <scope>TOPOLOGY</scope>
    <scope>MUTAGENESIS OF LYS-18; SER-19; THR-33; GLU-225; GLU-354; LYS-461; SER-462 AND THR-480</scope>
    <scope>DISRUPTION PHENOTYPE</scope>
</reference>
<proteinExistence type="evidence at protein level"/>
<keyword id="KW-0106">Calcium</keyword>
<keyword id="KW-0342">GTP-binding</keyword>
<keyword id="KW-0378">Hydrolase</keyword>
<keyword id="KW-0472">Membrane</keyword>
<keyword id="KW-0479">Metal-binding</keyword>
<keyword id="KW-0496">Mitochondrion</keyword>
<keyword id="KW-1000">Mitochondrion outer membrane</keyword>
<keyword id="KW-0547">Nucleotide-binding</keyword>
<keyword id="KW-1185">Reference proteome</keyword>
<keyword id="KW-0677">Repeat</keyword>
<keyword id="KW-0812">Transmembrane</keyword>
<keyword id="KW-1133">Transmembrane helix</keyword>
<gene>
    <name type="primary">GEM1</name>
    <name type="ordered locus">YAL048C</name>
</gene>
<organism>
    <name type="scientific">Saccharomyces cerevisiae (strain ATCC 204508 / S288c)</name>
    <name type="common">Baker's yeast</name>
    <dbReference type="NCBI Taxonomy" id="559292"/>
    <lineage>
        <taxon>Eukaryota</taxon>
        <taxon>Fungi</taxon>
        <taxon>Dikarya</taxon>
        <taxon>Ascomycota</taxon>
        <taxon>Saccharomycotina</taxon>
        <taxon>Saccharomycetes</taxon>
        <taxon>Saccharomycetales</taxon>
        <taxon>Saccharomycetaceae</taxon>
        <taxon>Saccharomyces</taxon>
    </lineage>
</organism>
<sequence>MTKETIRVVICGDEGVGKSSLIVSLTKAEFIPTIQDVLPPISIPRDFSSSPTYSPKNTVLIDTSDSDLIALDHELKSADVIWLVYCDHESYDHVSLFWLPHFRSLGLNIPVILCKNKCDSISNVNANAMVVSENSDDDIDTKVEDEEFIPILMEFKEIDTCIKTSAKTQFDLNQAFYLCQRAITHPISPLFDAMVGELKPLAVMALKRIFLLSDLNQDSYLDDNEILGLQKKCFNKSIDVNELNFIKDLLLDISKHDQEYINRKLYVPGKGITKDGFLVLNKIYAERGRHETTWAILRTFHYTDSLCINDKILHPRLVVPDTSSVELSPKGYRFLVDIFLKFDIDNDGGLNNQELHRLFKCTPGLPKLWTSTNFPFSTVVNNKGCITLQGWLAQWSMTTFLNYSTTTAYLVYFGFQEDARLALQVTKPRKMRRRSGKLYRSNINDRKVFNCFVIGKPCCGKSSLLEAFLGRSFSEEYSPTIKPRIAVNSLELKGGKQYYLILQELGEQEYAILENKDKLKECDVICLTYDSSDPESFSYLVSLLDKFTHLQDLPLVFVASKADLDKQQQRCQIQPDELADELFVNHPLHISSRWLSSLNELFIKITEAALDPGKNTPGLPEETAAKDVDYRQTALIFGSTVGFVALCSFTLMKLFKSSKFSK</sequence>
<accession>P39722</accession>
<accession>D6VPG8</accession>
<feature type="chain" id="PRO_0000202422" description="Mitochondrial Rho GTPase 1">
    <location>
        <begin position="1"/>
        <end position="662"/>
    </location>
</feature>
<feature type="topological domain" description="Cytoplasmic" evidence="1">
    <location>
        <begin position="1"/>
        <end position="634"/>
    </location>
</feature>
<feature type="transmembrane region" description="Helical; Anchor for type IV membrane protein" evidence="1">
    <location>
        <begin position="635"/>
        <end position="655"/>
    </location>
</feature>
<feature type="topological domain" description="Mitochondrial intermembrane" evidence="1">
    <location>
        <begin position="656"/>
        <end position="662"/>
    </location>
</feature>
<feature type="domain" description="Miro 1" evidence="3">
    <location>
        <begin position="3"/>
        <end position="185"/>
    </location>
</feature>
<feature type="domain" description="EF-hand 1" evidence="2">
    <location>
        <begin position="201"/>
        <end position="236"/>
    </location>
</feature>
<feature type="domain" description="EF-hand 2" evidence="2">
    <location>
        <begin position="330"/>
        <end position="365"/>
    </location>
</feature>
<feature type="domain" description="Miro 2" evidence="3">
    <location>
        <begin position="446"/>
        <end position="611"/>
    </location>
</feature>
<feature type="binding site" evidence="7">
    <location>
        <begin position="12"/>
        <end position="19"/>
    </location>
    <ligand>
        <name>GTP</name>
        <dbReference type="ChEBI" id="CHEBI:37565"/>
        <label>1</label>
    </ligand>
</feature>
<feature type="binding site" evidence="1">
    <location>
        <begin position="62"/>
        <end position="64"/>
    </location>
    <ligand>
        <name>GTP</name>
        <dbReference type="ChEBI" id="CHEBI:37565"/>
        <label>1</label>
    </ligand>
</feature>
<feature type="binding site" evidence="1">
    <location>
        <begin position="116"/>
        <end position="119"/>
    </location>
    <ligand>
        <name>GTP</name>
        <dbReference type="ChEBI" id="CHEBI:37565"/>
        <label>1</label>
    </ligand>
</feature>
<feature type="binding site" evidence="7">
    <location>
        <position position="214"/>
    </location>
    <ligand>
        <name>Ca(2+)</name>
        <dbReference type="ChEBI" id="CHEBI:29108"/>
        <label>1</label>
    </ligand>
</feature>
<feature type="binding site" evidence="7">
    <location>
        <position position="216"/>
    </location>
    <ligand>
        <name>Ca(2+)</name>
        <dbReference type="ChEBI" id="CHEBI:29108"/>
        <label>1</label>
    </ligand>
</feature>
<feature type="binding site" evidence="7">
    <location>
        <position position="218"/>
    </location>
    <ligand>
        <name>Ca(2+)</name>
        <dbReference type="ChEBI" id="CHEBI:29108"/>
        <label>1</label>
    </ligand>
</feature>
<feature type="binding site" evidence="7">
    <location>
        <position position="220"/>
    </location>
    <ligand>
        <name>Ca(2+)</name>
        <dbReference type="ChEBI" id="CHEBI:29108"/>
        <label>1</label>
    </ligand>
</feature>
<feature type="binding site" evidence="7">
    <location>
        <position position="225"/>
    </location>
    <ligand>
        <name>Ca(2+)</name>
        <dbReference type="ChEBI" id="CHEBI:29108"/>
        <label>1</label>
    </ligand>
</feature>
<feature type="binding site" evidence="7">
    <location>
        <position position="343"/>
    </location>
    <ligand>
        <name>Ca(2+)</name>
        <dbReference type="ChEBI" id="CHEBI:29108"/>
        <label>2</label>
    </ligand>
</feature>
<feature type="binding site" evidence="7">
    <location>
        <position position="345"/>
    </location>
    <ligand>
        <name>Ca(2+)</name>
        <dbReference type="ChEBI" id="CHEBI:29108"/>
        <label>2</label>
    </ligand>
</feature>
<feature type="binding site" evidence="7">
    <location>
        <position position="347"/>
    </location>
    <ligand>
        <name>Ca(2+)</name>
        <dbReference type="ChEBI" id="CHEBI:29108"/>
        <label>2</label>
    </ligand>
</feature>
<feature type="binding site" evidence="7">
    <location>
        <position position="354"/>
    </location>
    <ligand>
        <name>Ca(2+)</name>
        <dbReference type="ChEBI" id="CHEBI:29108"/>
        <label>2</label>
    </ligand>
</feature>
<feature type="binding site" evidence="7">
    <location>
        <begin position="455"/>
        <end position="462"/>
    </location>
    <ligand>
        <name>GTP</name>
        <dbReference type="ChEBI" id="CHEBI:37565"/>
        <label>2</label>
    </ligand>
</feature>
<feature type="binding site" evidence="1">
    <location>
        <begin position="491"/>
        <end position="495"/>
    </location>
    <ligand>
        <name>GTP</name>
        <dbReference type="ChEBI" id="CHEBI:37565"/>
        <label>2</label>
    </ligand>
</feature>
<feature type="binding site" evidence="1">
    <location>
        <begin position="560"/>
        <end position="563"/>
    </location>
    <ligand>
        <name>GTP</name>
        <dbReference type="ChEBI" id="CHEBI:37565"/>
        <label>2</label>
    </ligand>
</feature>
<feature type="mutagenesis site" description="Loss of function." evidence="4">
    <original>K</original>
    <variation>A</variation>
    <location>
        <position position="18"/>
    </location>
</feature>
<feature type="mutagenesis site" description="Loss of function." evidence="4">
    <original>S</original>
    <variation>N</variation>
    <location>
        <position position="19"/>
    </location>
</feature>
<feature type="mutagenesis site" description="No effect." evidence="4">
    <original>T</original>
    <variation>A</variation>
    <location>
        <position position="33"/>
    </location>
</feature>
<feature type="mutagenesis site" description="Induces collapsed, globular or grape-like mitochondria; when associated with A-354." evidence="4">
    <original>E</original>
    <variation>K</variation>
    <location>
        <position position="225"/>
    </location>
</feature>
<feature type="mutagenesis site" description="Induces collapsed, globular or grape-like mitochondria; when associated with A-225." evidence="4">
    <original>E</original>
    <variation>K</variation>
    <location>
        <position position="354"/>
    </location>
</feature>
<feature type="mutagenesis site" description="Induces collapsed, globular or grape-like mitochondria." evidence="4">
    <original>K</original>
    <variation>A</variation>
    <location>
        <position position="461"/>
    </location>
</feature>
<feature type="mutagenesis site" description="Induces collapsed, globular or grape-like mitochondria." evidence="4">
    <original>S</original>
    <variation>N</variation>
    <location>
        <position position="462"/>
    </location>
</feature>
<feature type="mutagenesis site" description="Induces collapsed, globular or grape-like mitochondria." evidence="4">
    <original>T</original>
    <variation>A</variation>
    <location>
        <position position="480"/>
    </location>
</feature>
<comment type="function">
    <text evidence="8">Mitochondrial GTPase involved in mitochondrial trafficking. Probably involved in control of anterograde transport of mitochondria and their subcellular distribution (Probable).</text>
</comment>
<comment type="subcellular location">
    <subcellularLocation>
        <location evidence="4 5 6">Mitochondrion outer membrane</location>
        <topology evidence="4 5 6">Single-pass type IV membrane protein</topology>
    </subcellularLocation>
</comment>
<comment type="disruption phenotype">
    <text evidence="4">Collapsed, globular, or grape-like mitochondria.</text>
</comment>
<comment type="similarity">
    <text evidence="3 7">Belongs to the mitochondrial Rho GTPase family.</text>
</comment>
<dbReference type="EC" id="3.6.5.-"/>
<dbReference type="EMBL" id="U12980">
    <property type="protein sequence ID" value="AAC04983.1"/>
    <property type="molecule type" value="Genomic_DNA"/>
</dbReference>
<dbReference type="EMBL" id="BK006935">
    <property type="protein sequence ID" value="DAA06938.1"/>
    <property type="molecule type" value="Genomic_DNA"/>
</dbReference>
<dbReference type="PIR" id="S51971">
    <property type="entry name" value="S51971"/>
</dbReference>
<dbReference type="RefSeq" id="NP_009351.1">
    <property type="nucleotide sequence ID" value="NM_001178193.1"/>
</dbReference>
<dbReference type="SMR" id="P39722"/>
<dbReference type="BioGRID" id="31779">
    <property type="interactions" value="360"/>
</dbReference>
<dbReference type="ComplexPortal" id="CPX-3196">
    <property type="entry name" value="ERMES complex"/>
</dbReference>
<dbReference type="DIP" id="DIP-8142N"/>
<dbReference type="FunCoup" id="P39722">
    <property type="interactions" value="915"/>
</dbReference>
<dbReference type="IntAct" id="P39722">
    <property type="interactions" value="18"/>
</dbReference>
<dbReference type="MINT" id="P39722"/>
<dbReference type="STRING" id="4932.YAL048C"/>
<dbReference type="iPTMnet" id="P39722"/>
<dbReference type="PaxDb" id="4932-YAL048C"/>
<dbReference type="PeptideAtlas" id="P39722"/>
<dbReference type="EnsemblFungi" id="YAL048C_mRNA">
    <property type="protein sequence ID" value="YAL048C"/>
    <property type="gene ID" value="YAL048C"/>
</dbReference>
<dbReference type="GeneID" id="851249"/>
<dbReference type="KEGG" id="sce:YAL048C"/>
<dbReference type="AGR" id="SGD:S000000046"/>
<dbReference type="SGD" id="S000000046">
    <property type="gene designation" value="GEM1"/>
</dbReference>
<dbReference type="VEuPathDB" id="FungiDB:YAL048C"/>
<dbReference type="eggNOG" id="KOG1707">
    <property type="taxonomic scope" value="Eukaryota"/>
</dbReference>
<dbReference type="GeneTree" id="ENSGT00940000173880"/>
<dbReference type="HOGENOM" id="CLU_014255_3_0_1"/>
<dbReference type="InParanoid" id="P39722"/>
<dbReference type="OMA" id="HETTWGI"/>
<dbReference type="OrthoDB" id="10020961at2759"/>
<dbReference type="BioCyc" id="YEAST:G3O-28855-MONOMER"/>
<dbReference type="Reactome" id="R-SCE-9013419">
    <property type="pathway name" value="RHOT2 GTPase cycle"/>
</dbReference>
<dbReference type="Reactome" id="R-SCE-9013425">
    <property type="pathway name" value="RHOT1 GTPase cycle"/>
</dbReference>
<dbReference type="BioGRID-ORCS" id="851249">
    <property type="hits" value="3 hits in 10 CRISPR screens"/>
</dbReference>
<dbReference type="PRO" id="PR:P39722"/>
<dbReference type="Proteomes" id="UP000002311">
    <property type="component" value="Chromosome I"/>
</dbReference>
<dbReference type="RNAct" id="P39722">
    <property type="molecule type" value="protein"/>
</dbReference>
<dbReference type="GO" id="GO:0032865">
    <property type="term" value="C:ERMES complex"/>
    <property type="evidence" value="ECO:0000353"/>
    <property type="project" value="SGD"/>
</dbReference>
<dbReference type="GO" id="GO:0044233">
    <property type="term" value="C:mitochondria-associated endoplasmic reticulum membrane contact site"/>
    <property type="evidence" value="ECO:0000314"/>
    <property type="project" value="SGD"/>
</dbReference>
<dbReference type="GO" id="GO:0005741">
    <property type="term" value="C:mitochondrial outer membrane"/>
    <property type="evidence" value="ECO:0000314"/>
    <property type="project" value="SGD"/>
</dbReference>
<dbReference type="GO" id="GO:0005739">
    <property type="term" value="C:mitochondrion"/>
    <property type="evidence" value="ECO:0007005"/>
    <property type="project" value="SGD"/>
</dbReference>
<dbReference type="GO" id="GO:0098799">
    <property type="term" value="C:outer mitochondrial membrane protein complex"/>
    <property type="evidence" value="ECO:0000303"/>
    <property type="project" value="ComplexPortal"/>
</dbReference>
<dbReference type="GO" id="GO:0005509">
    <property type="term" value="F:calcium ion binding"/>
    <property type="evidence" value="ECO:0000314"/>
    <property type="project" value="SGD"/>
</dbReference>
<dbReference type="GO" id="GO:0005525">
    <property type="term" value="F:GTP binding"/>
    <property type="evidence" value="ECO:0000318"/>
    <property type="project" value="GO_Central"/>
</dbReference>
<dbReference type="GO" id="GO:0003924">
    <property type="term" value="F:GTPase activity"/>
    <property type="evidence" value="ECO:0000315"/>
    <property type="project" value="SGD"/>
</dbReference>
<dbReference type="GO" id="GO:0015886">
    <property type="term" value="P:heme transport"/>
    <property type="evidence" value="ECO:0000315"/>
    <property type="project" value="SGD"/>
</dbReference>
<dbReference type="GO" id="GO:0000001">
    <property type="term" value="P:mitochondrion inheritance"/>
    <property type="evidence" value="ECO:0000315"/>
    <property type="project" value="SGD"/>
</dbReference>
<dbReference type="GO" id="GO:0007005">
    <property type="term" value="P:mitochondrion organization"/>
    <property type="evidence" value="ECO:0000318"/>
    <property type="project" value="GO_Central"/>
</dbReference>
<dbReference type="GO" id="GO:1990456">
    <property type="term" value="P:mitochondrion-endoplasmic reticulum membrane tethering"/>
    <property type="evidence" value="ECO:0000315"/>
    <property type="project" value="SGD"/>
</dbReference>
<dbReference type="GO" id="GO:0055091">
    <property type="term" value="P:phospholipid homeostasis"/>
    <property type="evidence" value="ECO:0000316"/>
    <property type="project" value="SGD"/>
</dbReference>
<dbReference type="GO" id="GO:0010821">
    <property type="term" value="P:regulation of mitochondrion organization"/>
    <property type="evidence" value="ECO:0000315"/>
    <property type="project" value="SGD"/>
</dbReference>
<dbReference type="GO" id="GO:0007264">
    <property type="term" value="P:small GTPase-mediated signal transduction"/>
    <property type="evidence" value="ECO:0007669"/>
    <property type="project" value="InterPro"/>
</dbReference>
<dbReference type="CDD" id="cd01892">
    <property type="entry name" value="Miro2"/>
    <property type="match status" value="1"/>
</dbReference>
<dbReference type="FunFam" id="1.10.238.10:FF:000127">
    <property type="entry name" value="Mitochondrial Rho GTPase"/>
    <property type="match status" value="1"/>
</dbReference>
<dbReference type="FunFam" id="3.40.50.300:FF:000553">
    <property type="entry name" value="Mitochondrial Rho GTPase"/>
    <property type="match status" value="1"/>
</dbReference>
<dbReference type="FunFam" id="3.40.50.300:FF:000572">
    <property type="entry name" value="Mitochondrial Rho GTPase"/>
    <property type="match status" value="1"/>
</dbReference>
<dbReference type="Gene3D" id="1.10.238.10">
    <property type="entry name" value="EF-hand"/>
    <property type="match status" value="2"/>
</dbReference>
<dbReference type="Gene3D" id="3.40.50.300">
    <property type="entry name" value="P-loop containing nucleotide triphosphate hydrolases"/>
    <property type="match status" value="2"/>
</dbReference>
<dbReference type="InterPro" id="IPR011992">
    <property type="entry name" value="EF-hand-dom_pair"/>
</dbReference>
<dbReference type="InterPro" id="IPR013566">
    <property type="entry name" value="EF_hand_assoc_1"/>
</dbReference>
<dbReference type="InterPro" id="IPR013567">
    <property type="entry name" value="EF_hand_assoc_2"/>
</dbReference>
<dbReference type="InterPro" id="IPR002048">
    <property type="entry name" value="EF_hand_dom"/>
</dbReference>
<dbReference type="InterPro" id="IPR021181">
    <property type="entry name" value="Miro"/>
</dbReference>
<dbReference type="InterPro" id="IPR020860">
    <property type="entry name" value="MIRO_dom"/>
</dbReference>
<dbReference type="InterPro" id="IPR027417">
    <property type="entry name" value="P-loop_NTPase"/>
</dbReference>
<dbReference type="InterPro" id="IPR001806">
    <property type="entry name" value="Small_GTPase"/>
</dbReference>
<dbReference type="InterPro" id="IPR003578">
    <property type="entry name" value="Small_GTPase_Rho"/>
</dbReference>
<dbReference type="PANTHER" id="PTHR24072">
    <property type="entry name" value="RHO FAMILY GTPASE"/>
    <property type="match status" value="1"/>
</dbReference>
<dbReference type="Pfam" id="PF08355">
    <property type="entry name" value="EF_assoc_1"/>
    <property type="match status" value="1"/>
</dbReference>
<dbReference type="Pfam" id="PF08356">
    <property type="entry name" value="EF_assoc_2"/>
    <property type="match status" value="1"/>
</dbReference>
<dbReference type="Pfam" id="PF00071">
    <property type="entry name" value="Ras"/>
    <property type="match status" value="2"/>
</dbReference>
<dbReference type="PIRSF" id="PIRSF037488">
    <property type="entry name" value="Mt_Rho_GTPase"/>
    <property type="match status" value="1"/>
</dbReference>
<dbReference type="PRINTS" id="PR00449">
    <property type="entry name" value="RASTRNSFRMNG"/>
</dbReference>
<dbReference type="SMART" id="SM00175">
    <property type="entry name" value="RAB"/>
    <property type="match status" value="1"/>
</dbReference>
<dbReference type="SMART" id="SM00173">
    <property type="entry name" value="RAS"/>
    <property type="match status" value="1"/>
</dbReference>
<dbReference type="SMART" id="SM00174">
    <property type="entry name" value="RHO"/>
    <property type="match status" value="1"/>
</dbReference>
<dbReference type="SUPFAM" id="SSF47473">
    <property type="entry name" value="EF-hand"/>
    <property type="match status" value="1"/>
</dbReference>
<dbReference type="SUPFAM" id="SSF52540">
    <property type="entry name" value="P-loop containing nucleoside triphosphate hydrolases"/>
    <property type="match status" value="2"/>
</dbReference>
<dbReference type="PROSITE" id="PS50222">
    <property type="entry name" value="EF_HAND_2"/>
    <property type="match status" value="2"/>
</dbReference>
<dbReference type="PROSITE" id="PS51423">
    <property type="entry name" value="MIRO"/>
    <property type="match status" value="2"/>
</dbReference>
<name>GEM1_YEAST</name>